<gene>
    <name evidence="6" type="primary">alm1</name>
    <name evidence="9" type="ORF">SPAC1486.04c</name>
</gene>
<protein>
    <recommendedName>
        <fullName evidence="7">Nucleoporin alm1</fullName>
    </recommendedName>
    <alternativeName>
        <fullName>Abnormal long morphology protein 1</fullName>
    </alternativeName>
    <alternativeName>
        <fullName>Sp8</fullName>
    </alternativeName>
</protein>
<accession>Q9UTK5</accession>
<accession>O13313</accession>
<accession>Q9UTT8</accession>
<feature type="chain" id="PRO_0000064565" description="Nucleoporin alm1">
    <location>
        <begin position="1"/>
        <end position="1727"/>
    </location>
</feature>
<feature type="region of interest" description="Disordered" evidence="2">
    <location>
        <begin position="1423"/>
        <end position="1459"/>
    </location>
</feature>
<feature type="region of interest" description="Disordered" evidence="2">
    <location>
        <begin position="1477"/>
        <end position="1500"/>
    </location>
</feature>
<feature type="region of interest" description="Disordered" evidence="2">
    <location>
        <begin position="1656"/>
        <end position="1727"/>
    </location>
</feature>
<feature type="coiled-coil region" evidence="1">
    <location>
        <begin position="57"/>
        <end position="361"/>
    </location>
</feature>
<feature type="coiled-coil region" evidence="1">
    <location>
        <begin position="443"/>
        <end position="463"/>
    </location>
</feature>
<feature type="coiled-coil region" evidence="1">
    <location>
        <begin position="542"/>
        <end position="740"/>
    </location>
</feature>
<feature type="coiled-coil region" evidence="1">
    <location>
        <begin position="804"/>
        <end position="1106"/>
    </location>
</feature>
<feature type="coiled-coil region" evidence="1">
    <location>
        <begin position="1223"/>
        <end position="1427"/>
    </location>
</feature>
<feature type="coiled-coil region" evidence="1">
    <location>
        <begin position="1497"/>
        <end position="1555"/>
    </location>
</feature>
<feature type="coiled-coil region" evidence="1">
    <location>
        <begin position="1601"/>
        <end position="1664"/>
    </location>
</feature>
<feature type="compositionally biased region" description="Polar residues" evidence="2">
    <location>
        <begin position="1423"/>
        <end position="1448"/>
    </location>
</feature>
<feature type="compositionally biased region" description="Polar residues" evidence="2">
    <location>
        <begin position="1672"/>
        <end position="1684"/>
    </location>
</feature>
<feature type="compositionally biased region" description="Polar residues" evidence="2">
    <location>
        <begin position="1702"/>
        <end position="1714"/>
    </location>
</feature>
<feature type="modified residue" description="Phosphoserine" evidence="4">
    <location>
        <position position="1706"/>
    </location>
</feature>
<dbReference type="EMBL" id="CU329670">
    <property type="protein sequence ID" value="CAB62414.1"/>
    <property type="molecule type" value="Genomic_DNA"/>
</dbReference>
<dbReference type="EMBL" id="AF010473">
    <property type="protein sequence ID" value="AAB65416.1"/>
    <property type="status" value="ALT_INIT"/>
    <property type="molecule type" value="mRNA"/>
</dbReference>
<dbReference type="EMBL" id="AB028012">
    <property type="protein sequence ID" value="BAA87316.1"/>
    <property type="molecule type" value="Genomic_DNA"/>
</dbReference>
<dbReference type="PIR" id="T43527">
    <property type="entry name" value="T43527"/>
</dbReference>
<dbReference type="PIR" id="T50073">
    <property type="entry name" value="T50073"/>
</dbReference>
<dbReference type="RefSeq" id="NP_594092.1">
    <property type="nucleotide sequence ID" value="NM_001019516.2"/>
</dbReference>
<dbReference type="SMR" id="Q9UTK5"/>
<dbReference type="BioGRID" id="279328">
    <property type="interactions" value="220"/>
</dbReference>
<dbReference type="FunCoup" id="Q9UTK5">
    <property type="interactions" value="218"/>
</dbReference>
<dbReference type="STRING" id="284812.Q9UTK5"/>
<dbReference type="iPTMnet" id="Q9UTK5"/>
<dbReference type="PaxDb" id="4896-SPAC1486.04c.1"/>
<dbReference type="EnsemblFungi" id="SPAC1486.04c.1">
    <property type="protein sequence ID" value="SPAC1486.04c.1:pep"/>
    <property type="gene ID" value="SPAC1486.04c"/>
</dbReference>
<dbReference type="GeneID" id="2542883"/>
<dbReference type="KEGG" id="spo:2542883"/>
<dbReference type="PomBase" id="SPAC1486.04c">
    <property type="gene designation" value="alm1"/>
</dbReference>
<dbReference type="VEuPathDB" id="FungiDB:SPAC1486.04c"/>
<dbReference type="eggNOG" id="KOG4674">
    <property type="taxonomic scope" value="Eukaryota"/>
</dbReference>
<dbReference type="HOGENOM" id="CLU_240701_0_0_1"/>
<dbReference type="InParanoid" id="Q9UTK5"/>
<dbReference type="OMA" id="DEFRNQG"/>
<dbReference type="PhylomeDB" id="Q9UTK5"/>
<dbReference type="PRO" id="PR:Q9UTK5"/>
<dbReference type="Proteomes" id="UP000002485">
    <property type="component" value="Chromosome I"/>
</dbReference>
<dbReference type="GO" id="GO:0005635">
    <property type="term" value="C:nuclear envelope"/>
    <property type="evidence" value="ECO:0000314"/>
    <property type="project" value="PomBase"/>
</dbReference>
<dbReference type="GO" id="GO:0005643">
    <property type="term" value="C:nuclear pore"/>
    <property type="evidence" value="ECO:0000269"/>
    <property type="project" value="PomBase"/>
</dbReference>
<dbReference type="GO" id="GO:0044615">
    <property type="term" value="C:nuclear pore nuclear basket"/>
    <property type="evidence" value="ECO:0000315"/>
    <property type="project" value="PomBase"/>
</dbReference>
<dbReference type="GO" id="GO:0140602">
    <property type="term" value="C:nucleolar peripheral inclusion body"/>
    <property type="evidence" value="ECO:0000314"/>
    <property type="project" value="PomBase"/>
</dbReference>
<dbReference type="GO" id="GO:0005634">
    <property type="term" value="C:nucleus"/>
    <property type="evidence" value="ECO:0007005"/>
    <property type="project" value="PomBase"/>
</dbReference>
<dbReference type="GO" id="GO:0017056">
    <property type="term" value="F:structural constituent of nuclear pore"/>
    <property type="evidence" value="ECO:0000269"/>
    <property type="project" value="PomBase"/>
</dbReference>
<dbReference type="GO" id="GO:0006406">
    <property type="term" value="P:mRNA export from nucleus"/>
    <property type="evidence" value="ECO:0000318"/>
    <property type="project" value="GO_Central"/>
</dbReference>
<dbReference type="GO" id="GO:0120292">
    <property type="term" value="P:positive regulation of mitotic recombination-dependent replication fork processing"/>
    <property type="evidence" value="ECO:0000315"/>
    <property type="project" value="PomBase"/>
</dbReference>
<dbReference type="GO" id="GO:0015031">
    <property type="term" value="P:protein transport"/>
    <property type="evidence" value="ECO:0007669"/>
    <property type="project" value="UniProtKB-KW"/>
</dbReference>
<dbReference type="Gene3D" id="1.10.287.1490">
    <property type="match status" value="1"/>
</dbReference>
<dbReference type="PANTHER" id="PTHR18898:SF2">
    <property type="entry name" value="NUCLEOPROTEIN TPR"/>
    <property type="match status" value="1"/>
</dbReference>
<dbReference type="PANTHER" id="PTHR18898">
    <property type="entry name" value="NUCLEOPROTEIN TPR-RELATED"/>
    <property type="match status" value="1"/>
</dbReference>
<sequence length="1727" mass="197860">MSSGGLEDDIQLVHEFLDVSFEDIKPLVSVNGFAVFISAIKTKVKDINALKDQLVLQEVNHEHKENVLTKKINFLEQQLQSSNNQAEESRNLISVLRNENESLKTNLENQNKRFDALTTENQSLRRANSELQEQSKIASEQLSIAKDQIEALQNENSHLGEQVQSAHQALSDIEERKKQHMFASSSSRVKEEILVQEKSALVSDLASLQSDHSKVCEKLEVSSRQVQDLEKKLAGLAQQNTELNEKIQLFEQKRSNYSSDGNISKILETDPTSIKELEEEVETQKRLTALWESKSSELQSEVAALQEKLTSQQSLYNNVTEELNNNKQQLLISENSLRELQEKYDSVVSELQVVKENKNTSVSAGVGLFSPLAQKLSAVQNPEFSFTKVYSDNMKLQQKVSSLKLQLDRLTNKFSSFCEQVKQRIPVVKQQRSEIVRNNIYMNFLSESLETSNNNLTKVQAELLSTKMRQEACYLQLTASRTQCSDLSREVICLMAELDHLNETKSRNVPATVQVALDEYAQNPSTASETLVNKELANFSSIKEAVSKTLELREKVRALECDVEIQKQTVQYQISNAVKENSNTLSEQIKNLESELNSSKIKNESLLNERNLLKEMLATSRSSILSHNSSAGNIDDKMKSIDESTRELEKNYEVYRNEMTAIQESLSKRNQDLLSEMEAIRKELENSKYQQQLSTDRLTNANNDVEAFKKEAKELRSINQNLQDIISRQDQRASKFAEELLHVNSLAERLKGELNASKGEKDLRKRTQERLISENDKLLAERERLMSLVSDLQTFLNQQQLSDAARKVKFESEKESLSLSLQKLKESNEKMSNDLHSLQKSLEKSGIEYSSRIKTLMLEKQSLSEDNRKLLDNQQMMEIKLQELNGVIELEKQRFSTLEAKFTQQKNTSYSEREALLESSLSDLQSKHTSLESQYNYSLRNIEQLQAASKLAEEMVERVKTEYDEYRLQTSESLEKNHLKITSLEQRIVILQDEIASSSLRCENITKDSETRVALLLEENKHLNNELSSHRNAEKQHLEKENDYKQQLLLVTEDLRKTREDYEKELLRHADARSTLQKLREDYTKALEQVEDLNKEIALKAGINESQPFPISEKEDPLRQEVYVLKKQNAMLLTQLQSSNLNFAEITSPSPDLDSVMKLGLSDLQNHVKRISKEMEIISCQRQLLFLENKKLKRTVESSNRVIADLQRGITEKDVSSTSESVGERSNYLNMVALLNESNKSLRENLERNEEVITELREKIETLKTDLANFRLNKEQLESQLQTEKAAVKKLENSNEEYKRHNQEILLSLNSSTSTSSDASRLKNELVSKENLIEELNQEIGHLKSELETVKSKSEDLENERAQNQSKIEQLELKNTKLAAAWRTKYEQVVNKSLEKHNQIRQQLSQKTSELEAKVAECHQLNEQLNKPSATPTATTQSEPSTVSLEEFNSTKEELSSTQRKLSEIMDILNTTKEELEKVRQNSNKSEGTSKDTEIPNEEEMERKKVMQQEVLRLRSRIAKELQKNELLRKQNQVLQDQVKALQETVVSSEEAESASVHADTKDLENLKKTEEMLSVTFQVIFNESISDFSTSTADFTTFVQKEWEKRREILQKDVEEQVAQSHQKQLDNIRKELEMRNKLKLSMLEKNLARVRAELEQSKKKDSPAILSLEASKNTDSNKSNSEVPAAQVKEKKLIAKTHSVDTNSPPKRSSSDAGMDVSNDVKKAK</sequence>
<keyword id="KW-0175">Coiled coil</keyword>
<keyword id="KW-0509">mRNA transport</keyword>
<keyword id="KW-0906">Nuclear pore complex</keyword>
<keyword id="KW-0539">Nucleus</keyword>
<keyword id="KW-0597">Phosphoprotein</keyword>
<keyword id="KW-0653">Protein transport</keyword>
<keyword id="KW-1185">Reference proteome</keyword>
<keyword id="KW-0811">Translocation</keyword>
<keyword id="KW-0813">Transport</keyword>
<name>ALM1_SCHPO</name>
<organism>
    <name type="scientific">Schizosaccharomyces pombe (strain 972 / ATCC 24843)</name>
    <name type="common">Fission yeast</name>
    <dbReference type="NCBI Taxonomy" id="284812"/>
    <lineage>
        <taxon>Eukaryota</taxon>
        <taxon>Fungi</taxon>
        <taxon>Dikarya</taxon>
        <taxon>Ascomycota</taxon>
        <taxon>Taphrinomycotina</taxon>
        <taxon>Schizosaccharomycetes</taxon>
        <taxon>Schizosaccharomycetales</taxon>
        <taxon>Schizosaccharomycetaceae</taxon>
        <taxon>Schizosaccharomyces</taxon>
    </lineage>
</organism>
<proteinExistence type="evidence at protein level"/>
<evidence type="ECO:0000255" key="1"/>
<evidence type="ECO:0000256" key="2">
    <source>
        <dbReference type="SAM" id="MobiDB-lite"/>
    </source>
</evidence>
<evidence type="ECO:0000269" key="3">
    <source>
    </source>
</evidence>
<evidence type="ECO:0000269" key="4">
    <source>
    </source>
</evidence>
<evidence type="ECO:0000269" key="5">
    <source>
    </source>
</evidence>
<evidence type="ECO:0000303" key="6">
    <source>
    </source>
</evidence>
<evidence type="ECO:0000303" key="7">
    <source>
    </source>
</evidence>
<evidence type="ECO:0000305" key="8"/>
<evidence type="ECO:0000312" key="9">
    <source>
        <dbReference type="PomBase" id="SPAC1486.04c"/>
    </source>
</evidence>
<comment type="function">
    <text evidence="3 5">Maintains the proteasome and its anchor cut8 at the nucleus envelope and is required for kinetochore component proteostasis (PubMed:28974540). Proper kinetochore stoichiometry ensures the correct attachment of kinetochores to spindle microtubules during cytokinesis (PubMed:10660053, PubMed:28974540). Required for the localization of spindle assembly checkpoint (SAC) protein mad2 and bub1 to the nucleus envelope during interphase, but not their localization during mitosis (PubMed:28974540).</text>
</comment>
<comment type="subcellular location">
    <subcellularLocation>
        <location evidence="5">Nucleus</location>
        <location evidence="5">Nuclear pore complex</location>
    </subcellularLocation>
    <subcellularLocation>
        <location evidence="5">Nucleus envelope</location>
    </subcellularLocation>
</comment>
<comment type="disruption phenotype">
    <text evidence="5">Decreases cut8 localization to the nuclear envelope (PubMed:28974540). Increases kinetochore component protein levels, including cnp3 (PubMed:28974540). Asynchronous kinetochore segregation during metaphase, with lagging kinetochores present during anaphase B (PubMed:28974540). Increases spindle assembly checkpoint (SAC) activation and results in mitotic metaphase/anaphase transition delay (PubMed:28974540). Abnormal chromosome segregation; lagging mitotic chromosomes during anaphase B and unequal mitotic sister chromatid segregation (PubMed:28974540). Sensitive to thiabendazole (PubMed:28974540). Simultaneous disruption of spindle assembly checkpoint (SAC) proteins bub1 or mad2 results in a growth defect (PubMed:28974540).</text>
</comment>
<comment type="sequence caution" evidence="8">
    <conflict type="erroneous initiation">
        <sequence resource="EMBL-CDS" id="AAB65416"/>
    </conflict>
</comment>
<reference key="1">
    <citation type="journal article" date="2002" name="Nature">
        <title>The genome sequence of Schizosaccharomyces pombe.</title>
        <authorList>
            <person name="Wood V."/>
            <person name="Gwilliam R."/>
            <person name="Rajandream M.A."/>
            <person name="Lyne M.H."/>
            <person name="Lyne R."/>
            <person name="Stewart A."/>
            <person name="Sgouros J.G."/>
            <person name="Peat N."/>
            <person name="Hayles J."/>
            <person name="Baker S.G."/>
            <person name="Basham D."/>
            <person name="Bowman S."/>
            <person name="Brooks K."/>
            <person name="Brown D."/>
            <person name="Brown S."/>
            <person name="Chillingworth T."/>
            <person name="Churcher C.M."/>
            <person name="Collins M."/>
            <person name="Connor R."/>
            <person name="Cronin A."/>
            <person name="Davis P."/>
            <person name="Feltwell T."/>
            <person name="Fraser A."/>
            <person name="Gentles S."/>
            <person name="Goble A."/>
            <person name="Hamlin N."/>
            <person name="Harris D.E."/>
            <person name="Hidalgo J."/>
            <person name="Hodgson G."/>
            <person name="Holroyd S."/>
            <person name="Hornsby T."/>
            <person name="Howarth S."/>
            <person name="Huckle E.J."/>
            <person name="Hunt S."/>
            <person name="Jagels K."/>
            <person name="James K.D."/>
            <person name="Jones L."/>
            <person name="Jones M."/>
            <person name="Leather S."/>
            <person name="McDonald S."/>
            <person name="McLean J."/>
            <person name="Mooney P."/>
            <person name="Moule S."/>
            <person name="Mungall K.L."/>
            <person name="Murphy L.D."/>
            <person name="Niblett D."/>
            <person name="Odell C."/>
            <person name="Oliver K."/>
            <person name="O'Neil S."/>
            <person name="Pearson D."/>
            <person name="Quail M.A."/>
            <person name="Rabbinowitsch E."/>
            <person name="Rutherford K.M."/>
            <person name="Rutter S."/>
            <person name="Saunders D."/>
            <person name="Seeger K."/>
            <person name="Sharp S."/>
            <person name="Skelton J."/>
            <person name="Simmonds M.N."/>
            <person name="Squares R."/>
            <person name="Squares S."/>
            <person name="Stevens K."/>
            <person name="Taylor K."/>
            <person name="Taylor R.G."/>
            <person name="Tivey A."/>
            <person name="Walsh S.V."/>
            <person name="Warren T."/>
            <person name="Whitehead S."/>
            <person name="Woodward J.R."/>
            <person name="Volckaert G."/>
            <person name="Aert R."/>
            <person name="Robben J."/>
            <person name="Grymonprez B."/>
            <person name="Weltjens I."/>
            <person name="Vanstreels E."/>
            <person name="Rieger M."/>
            <person name="Schaefer M."/>
            <person name="Mueller-Auer S."/>
            <person name="Gabel C."/>
            <person name="Fuchs M."/>
            <person name="Duesterhoeft A."/>
            <person name="Fritzc C."/>
            <person name="Holzer E."/>
            <person name="Moestl D."/>
            <person name="Hilbert H."/>
            <person name="Borzym K."/>
            <person name="Langer I."/>
            <person name="Beck A."/>
            <person name="Lehrach H."/>
            <person name="Reinhardt R."/>
            <person name="Pohl T.M."/>
            <person name="Eger P."/>
            <person name="Zimmermann W."/>
            <person name="Wedler H."/>
            <person name="Wambutt R."/>
            <person name="Purnelle B."/>
            <person name="Goffeau A."/>
            <person name="Cadieu E."/>
            <person name="Dreano S."/>
            <person name="Gloux S."/>
            <person name="Lelaure V."/>
            <person name="Mottier S."/>
            <person name="Galibert F."/>
            <person name="Aves S.J."/>
            <person name="Xiang Z."/>
            <person name="Hunt C."/>
            <person name="Moore K."/>
            <person name="Hurst S.M."/>
            <person name="Lucas M."/>
            <person name="Rochet M."/>
            <person name="Gaillardin C."/>
            <person name="Tallada V.A."/>
            <person name="Garzon A."/>
            <person name="Thode G."/>
            <person name="Daga R.R."/>
            <person name="Cruzado L."/>
            <person name="Jimenez J."/>
            <person name="Sanchez M."/>
            <person name="del Rey F."/>
            <person name="Benito J."/>
            <person name="Dominguez A."/>
            <person name="Revuelta J.L."/>
            <person name="Moreno S."/>
            <person name="Armstrong J."/>
            <person name="Forsburg S.L."/>
            <person name="Cerutti L."/>
            <person name="Lowe T."/>
            <person name="McCombie W.R."/>
            <person name="Paulsen I."/>
            <person name="Potashkin J."/>
            <person name="Shpakovski G.V."/>
            <person name="Ussery D."/>
            <person name="Barrell B.G."/>
            <person name="Nurse P."/>
        </authorList>
    </citation>
    <scope>NUCLEOTIDE SEQUENCE [LARGE SCALE GENOMIC DNA]</scope>
    <source>
        <strain>972 / ATCC 24843</strain>
    </source>
</reference>
<reference key="2">
    <citation type="journal article" date="2000" name="Mol. Gen. Genet.">
        <title>The alm1+ gene from Schizosaccharomyces pombe encodes a coiled-coil protein that associates with the medial region during mitosis.</title>
        <authorList>
            <person name="Jimenez M."/>
            <person name="Petit T."/>
            <person name="Gancedo C."/>
            <person name="Goday C."/>
        </authorList>
    </citation>
    <scope>NUCLEOTIDE SEQUENCE [MRNA] OF 495-1727</scope>
    <scope>CHARACTERIZATION</scope>
    <source>
        <strain>972 / ATCC 24843</strain>
    </source>
</reference>
<reference key="3">
    <citation type="journal article" date="2000" name="Genes Cells">
        <title>Large-scale screening of intracellular protein localization in living fission yeast cells by the use of a GFP-fusion genomic DNA library.</title>
        <authorList>
            <person name="Ding D.-Q."/>
            <person name="Tomita Y."/>
            <person name="Yamamoto A."/>
            <person name="Chikashige Y."/>
            <person name="Haraguchi T."/>
            <person name="Hiraoka Y."/>
        </authorList>
    </citation>
    <scope>NUCLEOTIDE SEQUENCE [LARGE SCALE GENOMIC DNA] OF 644-834</scope>
    <source>
        <strain>ATCC 38364 / 968</strain>
    </source>
</reference>
<reference key="4">
    <citation type="journal article" date="2008" name="J. Proteome Res.">
        <title>Phosphoproteome analysis of fission yeast.</title>
        <authorList>
            <person name="Wilson-Grady J.T."/>
            <person name="Villen J."/>
            <person name="Gygi S.P."/>
        </authorList>
    </citation>
    <scope>PHOSPHORYLATION [LARGE SCALE ANALYSIS] AT SER-1706</scope>
    <scope>IDENTIFICATION BY MASS SPECTROMETRY</scope>
</reference>
<reference key="5">
    <citation type="journal article" date="2017" name="J. Cell Biol.">
        <title>The fission yeast nucleoporin Alm1 is required for proteasomal degradation of kinetochore components.</title>
        <authorList>
            <person name="Salas-Pino S."/>
            <person name="Gallardo P."/>
            <person name="Barrales R.R."/>
            <person name="Braun S."/>
            <person name="Daga R.R."/>
        </authorList>
    </citation>
    <scope>FUNCTION</scope>
    <scope>SUBCELLULAR LOCATION</scope>
    <scope>DISRUPTION PHENOTYPE</scope>
</reference>